<feature type="signal peptide" evidence="1">
    <location>
        <begin position="1"/>
        <end position="18"/>
    </location>
</feature>
<feature type="chain" id="PRO_0000296383" description="Cuticle protein 1" evidence="1">
    <location>
        <begin position="19"/>
        <end position="174"/>
    </location>
</feature>
<keyword id="KW-0903">Direct protein sequencing</keyword>
<keyword id="KW-0964">Secreted</keyword>
<keyword id="KW-0732">Signal</keyword>
<reference evidence="4 5" key="1">
    <citation type="journal article" date="2008" name="Toxicon">
        <title>Immunochemical and proteomic technologies as tools for unravelling toxins involved in envenoming by accidental contact with Lonomia obliqua caterpillars.</title>
        <authorList>
            <person name="Ricci-Silva M.E."/>
            <person name="Valente R.H."/>
            <person name="Leon I.R."/>
            <person name="Tambourgi D.V."/>
            <person name="Ramos O.H.P."/>
            <person name="Perales J."/>
            <person name="Chudzinski-Tavassi A.M."/>
        </authorList>
    </citation>
    <scope>NUCLEOTIDE SEQUENCE [GENOMIC DNA]</scope>
    <scope>PROTEIN SEQUENCE OF 28-47; 56-76 AND 113-124</scope>
    <source>
        <tissue evidence="2">Larval bristle</tissue>
    </source>
</reference>
<protein>
    <recommendedName>
        <fullName evidence="5">Cuticle protein 1</fullName>
    </recommendedName>
    <alternativeName>
        <fullName evidence="3">Lipocalin-2</fullName>
    </alternativeName>
</protein>
<evidence type="ECO:0000255" key="1"/>
<evidence type="ECO:0000269" key="2">
    <source>
    </source>
</evidence>
<evidence type="ECO:0000303" key="3">
    <source>
    </source>
</evidence>
<evidence type="ECO:0000305" key="4"/>
<evidence type="ECO:0000312" key="5">
    <source>
        <dbReference type="EMBL" id="ABU88847.1"/>
    </source>
</evidence>
<name>CU01_LONON</name>
<organism>
    <name type="scientific">Lonomia obliqua</name>
    <name type="common">Moth</name>
    <dbReference type="NCBI Taxonomy" id="304329"/>
    <lineage>
        <taxon>Eukaryota</taxon>
        <taxon>Metazoa</taxon>
        <taxon>Ecdysozoa</taxon>
        <taxon>Arthropoda</taxon>
        <taxon>Hexapoda</taxon>
        <taxon>Insecta</taxon>
        <taxon>Pterygota</taxon>
        <taxon>Neoptera</taxon>
        <taxon>Endopterygota</taxon>
        <taxon>Lepidoptera</taxon>
        <taxon>Glossata</taxon>
        <taxon>Ditrysia</taxon>
        <taxon>Bombycoidea</taxon>
        <taxon>Saturniidae</taxon>
        <taxon>Hemileucinae</taxon>
        <taxon>Lonomia</taxon>
    </lineage>
</organism>
<comment type="subcellular location">
    <subcellularLocation>
        <location evidence="4">Secreted</location>
    </subcellularLocation>
</comment>
<proteinExistence type="evidence at protein level"/>
<dbReference type="EMBL" id="EU106115">
    <property type="protein sequence ID" value="ABU88847.1"/>
    <property type="molecule type" value="Genomic_DNA"/>
</dbReference>
<dbReference type="SMR" id="P85195"/>
<dbReference type="GO" id="GO:0005576">
    <property type="term" value="C:extracellular region"/>
    <property type="evidence" value="ECO:0007669"/>
    <property type="project" value="UniProtKB-SubCell"/>
</dbReference>
<accession>P85195</accession>
<accession>A7XZD7</accession>
<sequence length="174" mass="17937">MRFLIAFVAILGYASASAIYPLAYGVNAGDAQAAAIDAAVAAQDHARAANEGQARAVEAAVQYNTDATRQVAEANRDLHETAYWNGVAATQNAVAAAQSQVAAANGAAAAVRAAHESGAYVTPYVAPYAGSYVNPYAASLVTPYGYGINGLGAVGSWCLRSRRLPCRCPRLVNT</sequence>